<feature type="chain" id="PRO_1000045079" description="4-deoxy-L-threo-5-hexosulose-uronate ketol-isomerase">
    <location>
        <begin position="1"/>
        <end position="280"/>
    </location>
</feature>
<feature type="binding site" evidence="1">
    <location>
        <position position="198"/>
    </location>
    <ligand>
        <name>Zn(2+)</name>
        <dbReference type="ChEBI" id="CHEBI:29105"/>
    </ligand>
</feature>
<feature type="binding site" evidence="1">
    <location>
        <position position="200"/>
    </location>
    <ligand>
        <name>Zn(2+)</name>
        <dbReference type="ChEBI" id="CHEBI:29105"/>
    </ligand>
</feature>
<feature type="binding site" evidence="1">
    <location>
        <position position="205"/>
    </location>
    <ligand>
        <name>Zn(2+)</name>
        <dbReference type="ChEBI" id="CHEBI:29105"/>
    </ligand>
</feature>
<feature type="binding site" evidence="1">
    <location>
        <position position="247"/>
    </location>
    <ligand>
        <name>Zn(2+)</name>
        <dbReference type="ChEBI" id="CHEBI:29105"/>
    </ligand>
</feature>
<evidence type="ECO:0000255" key="1">
    <source>
        <dbReference type="HAMAP-Rule" id="MF_00687"/>
    </source>
</evidence>
<gene>
    <name evidence="1" type="primary">kduI</name>
    <name type="ordered locus">BF0071</name>
</gene>
<reference key="1">
    <citation type="journal article" date="2004" name="Proc. Natl. Acad. Sci. U.S.A.">
        <title>Genomic analysis of Bacteroides fragilis reveals extensive DNA inversions regulating cell surface adaptation.</title>
        <authorList>
            <person name="Kuwahara T."/>
            <person name="Yamashita A."/>
            <person name="Hirakawa H."/>
            <person name="Nakayama H."/>
            <person name="Toh H."/>
            <person name="Okada N."/>
            <person name="Kuhara S."/>
            <person name="Hattori M."/>
            <person name="Hayashi T."/>
            <person name="Ohnishi Y."/>
        </authorList>
    </citation>
    <scope>NUCLEOTIDE SEQUENCE [LARGE SCALE GENOMIC DNA]</scope>
    <source>
        <strain>YCH46</strain>
    </source>
</reference>
<dbReference type="EC" id="5.3.1.17" evidence="1"/>
<dbReference type="EMBL" id="AP006841">
    <property type="protein sequence ID" value="BAD46820.1"/>
    <property type="molecule type" value="Genomic_DNA"/>
</dbReference>
<dbReference type="RefSeq" id="WP_011201855.1">
    <property type="nucleotide sequence ID" value="NC_006347.1"/>
</dbReference>
<dbReference type="RefSeq" id="YP_097354.1">
    <property type="nucleotide sequence ID" value="NC_006347.1"/>
</dbReference>
<dbReference type="SMR" id="Q650K4"/>
<dbReference type="STRING" id="295405.BF0071"/>
<dbReference type="KEGG" id="bfr:BF0071"/>
<dbReference type="PATRIC" id="fig|295405.11.peg.108"/>
<dbReference type="HOGENOM" id="CLU_062609_0_0_10"/>
<dbReference type="OrthoDB" id="9770644at2"/>
<dbReference type="UniPathway" id="UPA00545">
    <property type="reaction ID" value="UER00826"/>
</dbReference>
<dbReference type="Proteomes" id="UP000002197">
    <property type="component" value="Chromosome"/>
</dbReference>
<dbReference type="GO" id="GO:0008697">
    <property type="term" value="F:4-deoxy-L-threo-5-hexosulose-uronate ketol-isomerase activity"/>
    <property type="evidence" value="ECO:0007669"/>
    <property type="project" value="UniProtKB-UniRule"/>
</dbReference>
<dbReference type="GO" id="GO:0008270">
    <property type="term" value="F:zinc ion binding"/>
    <property type="evidence" value="ECO:0007669"/>
    <property type="project" value="UniProtKB-UniRule"/>
</dbReference>
<dbReference type="GO" id="GO:0019698">
    <property type="term" value="P:D-galacturonate catabolic process"/>
    <property type="evidence" value="ECO:0007669"/>
    <property type="project" value="TreeGrafter"/>
</dbReference>
<dbReference type="GO" id="GO:0042840">
    <property type="term" value="P:D-glucuronate catabolic process"/>
    <property type="evidence" value="ECO:0007669"/>
    <property type="project" value="TreeGrafter"/>
</dbReference>
<dbReference type="GO" id="GO:0045490">
    <property type="term" value="P:pectin catabolic process"/>
    <property type="evidence" value="ECO:0007669"/>
    <property type="project" value="UniProtKB-UniRule"/>
</dbReference>
<dbReference type="CDD" id="cd20491">
    <property type="entry name" value="cupin_KduI_C"/>
    <property type="match status" value="1"/>
</dbReference>
<dbReference type="CDD" id="cd20294">
    <property type="entry name" value="cupin_KduI_N"/>
    <property type="match status" value="1"/>
</dbReference>
<dbReference type="FunFam" id="2.60.120.10:FF:000018">
    <property type="entry name" value="4-deoxy-L-threo-5-hexosulose-uronate ketol-isomerase"/>
    <property type="match status" value="1"/>
</dbReference>
<dbReference type="Gene3D" id="2.60.120.10">
    <property type="entry name" value="Jelly Rolls"/>
    <property type="match status" value="1"/>
</dbReference>
<dbReference type="Gene3D" id="2.60.120.520">
    <property type="entry name" value="pectin degrading enzyme 5-keto 4- deoxyuronate isomerase, domain 1"/>
    <property type="match status" value="1"/>
</dbReference>
<dbReference type="HAMAP" id="MF_00687">
    <property type="entry name" value="KduI"/>
    <property type="match status" value="1"/>
</dbReference>
<dbReference type="InterPro" id="IPR007045">
    <property type="entry name" value="KduI"/>
</dbReference>
<dbReference type="InterPro" id="IPR021120">
    <property type="entry name" value="KduI/IolB_isomerase"/>
</dbReference>
<dbReference type="InterPro" id="IPR027449">
    <property type="entry name" value="KduI_N"/>
</dbReference>
<dbReference type="InterPro" id="IPR014710">
    <property type="entry name" value="RmlC-like_jellyroll"/>
</dbReference>
<dbReference type="InterPro" id="IPR011051">
    <property type="entry name" value="RmlC_Cupin_sf"/>
</dbReference>
<dbReference type="NCBIfam" id="NF002091">
    <property type="entry name" value="PRK00924.1"/>
    <property type="match status" value="1"/>
</dbReference>
<dbReference type="PANTHER" id="PTHR38461">
    <property type="entry name" value="4-DEOXY-L-THREO-5-HEXOSULOSE-URONATE KETOL-ISOMERASE"/>
    <property type="match status" value="1"/>
</dbReference>
<dbReference type="PANTHER" id="PTHR38461:SF1">
    <property type="entry name" value="4-DEOXY-L-THREO-5-HEXOSULOSE-URONATE KETOL-ISOMERASE"/>
    <property type="match status" value="1"/>
</dbReference>
<dbReference type="Pfam" id="PF04962">
    <property type="entry name" value="KduI"/>
    <property type="match status" value="1"/>
</dbReference>
<dbReference type="PIRSF" id="PIRSF006625">
    <property type="entry name" value="KduI"/>
    <property type="match status" value="1"/>
</dbReference>
<dbReference type="SUPFAM" id="SSF51182">
    <property type="entry name" value="RmlC-like cupins"/>
    <property type="match status" value="1"/>
</dbReference>
<name>KDUI_BACFR</name>
<organism>
    <name type="scientific">Bacteroides fragilis (strain YCH46)</name>
    <dbReference type="NCBI Taxonomy" id="295405"/>
    <lineage>
        <taxon>Bacteria</taxon>
        <taxon>Pseudomonadati</taxon>
        <taxon>Bacteroidota</taxon>
        <taxon>Bacteroidia</taxon>
        <taxon>Bacteroidales</taxon>
        <taxon>Bacteroidaceae</taxon>
        <taxon>Bacteroides</taxon>
    </lineage>
</organism>
<protein>
    <recommendedName>
        <fullName evidence="1">4-deoxy-L-threo-5-hexosulose-uronate ketol-isomerase</fullName>
        <ecNumber evidence="1">5.3.1.17</ecNumber>
    </recommendedName>
    <alternativeName>
        <fullName evidence="1">5-keto-4-deoxyuronate isomerase</fullName>
    </alternativeName>
    <alternativeName>
        <fullName evidence="1">DKI isomerase</fullName>
    </alternativeName>
</protein>
<sequence length="280" mass="31795">MKTNYEIRYAAHPEDARSYDTKRIRRDFLIEKVFSADEVNMVYSMYDRMVVGGAMPVKEVLKLEAIDPLKAPYFLTRREMGIFNVGGPGVVRAGDTIFQLDYKEALYLGAGDRDVTFESTDAAHPAKFYFNSLAAHRNYPDKKVTKADAVVAEMGTLEGSNHRNINKMLVNQVLPTCQLQMGMTELAPGSVWNTMPAHVHSRRMEAYFYFEVPEEHAVCHFMGEVDETRHVWMKGDQAVLSPEWSIHSAAATHNYTFIWGMGGENLDYGDQDFSLITDLK</sequence>
<comment type="function">
    <text evidence="1">Catalyzes the isomerization of 5-dehydro-4-deoxy-D-glucuronate to 3-deoxy-D-glycero-2,5-hexodiulosonate.</text>
</comment>
<comment type="catalytic activity">
    <reaction evidence="1">
        <text>5-dehydro-4-deoxy-D-glucuronate = 3-deoxy-D-glycero-2,5-hexodiulosonate</text>
        <dbReference type="Rhea" id="RHEA:23896"/>
        <dbReference type="ChEBI" id="CHEBI:17117"/>
        <dbReference type="ChEBI" id="CHEBI:29071"/>
        <dbReference type="EC" id="5.3.1.17"/>
    </reaction>
</comment>
<comment type="cofactor">
    <cofactor evidence="1">
        <name>Zn(2+)</name>
        <dbReference type="ChEBI" id="CHEBI:29105"/>
    </cofactor>
    <text evidence="1">Binds 1 zinc ion per subunit.</text>
</comment>
<comment type="pathway">
    <text evidence="1">Glycan metabolism; pectin degradation; 2-dehydro-3-deoxy-D-gluconate from pectin: step 4/5.</text>
</comment>
<comment type="similarity">
    <text evidence="1">Belongs to the KduI family.</text>
</comment>
<accession>Q650K4</accession>
<proteinExistence type="inferred from homology"/>
<keyword id="KW-0413">Isomerase</keyword>
<keyword id="KW-0479">Metal-binding</keyword>
<keyword id="KW-0862">Zinc</keyword>